<organism>
    <name type="scientific">Escherichia coli O157:H7</name>
    <dbReference type="NCBI Taxonomy" id="83334"/>
    <lineage>
        <taxon>Bacteria</taxon>
        <taxon>Pseudomonadati</taxon>
        <taxon>Pseudomonadota</taxon>
        <taxon>Gammaproteobacteria</taxon>
        <taxon>Enterobacterales</taxon>
        <taxon>Enterobacteriaceae</taxon>
        <taxon>Escherichia</taxon>
    </lineage>
</organism>
<dbReference type="EMBL" id="AE005174">
    <property type="protein sequence ID" value="AAG59231.1"/>
    <property type="molecule type" value="Genomic_DNA"/>
</dbReference>
<dbReference type="EMBL" id="BA000007">
    <property type="protein sequence ID" value="BAB38438.1"/>
    <property type="molecule type" value="Genomic_DNA"/>
</dbReference>
<dbReference type="PIR" id="C86096">
    <property type="entry name" value="C86096"/>
</dbReference>
<dbReference type="PIR" id="G91255">
    <property type="entry name" value="G91255"/>
</dbReference>
<dbReference type="RefSeq" id="NP_313042.1">
    <property type="nucleotide sequence ID" value="NC_002695.1"/>
</dbReference>
<dbReference type="RefSeq" id="WP_001252058.1">
    <property type="nucleotide sequence ID" value="NZ_VOAI01000027.1"/>
</dbReference>
<dbReference type="SMR" id="P68185"/>
<dbReference type="STRING" id="155864.Z5630"/>
<dbReference type="GeneID" id="86861565"/>
<dbReference type="KEGG" id="ece:Z5630"/>
<dbReference type="PATRIC" id="fig|386585.9.peg.5238"/>
<dbReference type="eggNOG" id="COG3833">
    <property type="taxonomic scope" value="Bacteria"/>
</dbReference>
<dbReference type="HOGENOM" id="CLU_016047_1_2_6"/>
<dbReference type="OMA" id="QMFPIAV"/>
<dbReference type="Proteomes" id="UP000000558">
    <property type="component" value="Chromosome"/>
</dbReference>
<dbReference type="Proteomes" id="UP000002519">
    <property type="component" value="Chromosome"/>
</dbReference>
<dbReference type="GO" id="GO:0005886">
    <property type="term" value="C:plasma membrane"/>
    <property type="evidence" value="ECO:0007669"/>
    <property type="project" value="UniProtKB-SubCell"/>
</dbReference>
<dbReference type="GO" id="GO:0015423">
    <property type="term" value="F:ABC-type maltose transporter activity"/>
    <property type="evidence" value="ECO:0007669"/>
    <property type="project" value="TreeGrafter"/>
</dbReference>
<dbReference type="GO" id="GO:0042956">
    <property type="term" value="P:maltodextrin transmembrane transport"/>
    <property type="evidence" value="ECO:0007669"/>
    <property type="project" value="TreeGrafter"/>
</dbReference>
<dbReference type="CDD" id="cd06261">
    <property type="entry name" value="TM_PBP2"/>
    <property type="match status" value="1"/>
</dbReference>
<dbReference type="FunFam" id="1.10.3720.10:FF:000010">
    <property type="entry name" value="Maltose ABC transporter permease MalG"/>
    <property type="match status" value="1"/>
</dbReference>
<dbReference type="Gene3D" id="1.10.3720.10">
    <property type="entry name" value="MetI-like"/>
    <property type="match status" value="1"/>
</dbReference>
<dbReference type="InterPro" id="IPR050901">
    <property type="entry name" value="BP-dep_ABC_trans_perm"/>
</dbReference>
<dbReference type="InterPro" id="IPR000515">
    <property type="entry name" value="MetI-like"/>
</dbReference>
<dbReference type="InterPro" id="IPR035906">
    <property type="entry name" value="MetI-like_sf"/>
</dbReference>
<dbReference type="NCBIfam" id="NF008231">
    <property type="entry name" value="PRK10998.1"/>
    <property type="match status" value="1"/>
</dbReference>
<dbReference type="PANTHER" id="PTHR32243">
    <property type="entry name" value="MALTOSE TRANSPORT SYSTEM PERMEASE-RELATED"/>
    <property type="match status" value="1"/>
</dbReference>
<dbReference type="PANTHER" id="PTHR32243:SF50">
    <property type="entry name" value="MALTOSE_MALTODEXTRIN TRANSPORT SYSTEM PERMEASE PROTEIN MALG"/>
    <property type="match status" value="1"/>
</dbReference>
<dbReference type="Pfam" id="PF00528">
    <property type="entry name" value="BPD_transp_1"/>
    <property type="match status" value="1"/>
</dbReference>
<dbReference type="SUPFAM" id="SSF161098">
    <property type="entry name" value="MetI-like"/>
    <property type="match status" value="1"/>
</dbReference>
<dbReference type="PROSITE" id="PS50928">
    <property type="entry name" value="ABC_TM1"/>
    <property type="match status" value="1"/>
</dbReference>
<proteinExistence type="inferred from homology"/>
<feature type="chain" id="PRO_0000060083" description="Maltose/maltodextrin transport system permease protein MalG">
    <location>
        <begin position="1"/>
        <end position="296"/>
    </location>
</feature>
<feature type="topological domain" description="Cytoplasmic" evidence="2">
    <location>
        <begin position="1"/>
        <end position="12"/>
    </location>
</feature>
<feature type="transmembrane region" description="Helical" evidence="3">
    <location>
        <begin position="13"/>
        <end position="35"/>
    </location>
</feature>
<feature type="topological domain" description="Periplasmic" evidence="2">
    <location>
        <begin position="36"/>
        <end position="88"/>
    </location>
</feature>
<feature type="transmembrane region" description="Helical" evidence="3">
    <location>
        <begin position="89"/>
        <end position="111"/>
    </location>
</feature>
<feature type="topological domain" description="Cytoplasmic" evidence="2">
    <location>
        <begin position="112"/>
        <end position="123"/>
    </location>
</feature>
<feature type="transmembrane region" description="Helical" evidence="3">
    <location>
        <begin position="124"/>
        <end position="143"/>
    </location>
</feature>
<feature type="topological domain" description="Periplasmic" evidence="2">
    <location>
        <begin position="144"/>
        <end position="152"/>
    </location>
</feature>
<feature type="transmembrane region" description="Helical" evidence="3">
    <location>
        <begin position="153"/>
        <end position="175"/>
    </location>
</feature>
<feature type="topological domain" description="Cytoplasmic" evidence="2">
    <location>
        <begin position="176"/>
        <end position="204"/>
    </location>
</feature>
<feature type="transmembrane region" description="Helical" evidence="3">
    <location>
        <begin position="205"/>
        <end position="227"/>
    </location>
</feature>
<feature type="topological domain" description="Periplasmic" evidence="2">
    <location>
        <begin position="228"/>
        <end position="257"/>
    </location>
</feature>
<feature type="transmembrane region" description="Helical" evidence="3">
    <location>
        <begin position="258"/>
        <end position="280"/>
    </location>
</feature>
<feature type="topological domain" description="Cytoplasmic" evidence="2">
    <location>
        <begin position="281"/>
        <end position="296"/>
    </location>
</feature>
<feature type="domain" description="ABC transmembrane type-1" evidence="3">
    <location>
        <begin position="85"/>
        <end position="281"/>
    </location>
</feature>
<accession>P68185</accession>
<accession>P07622</accession>
<protein>
    <recommendedName>
        <fullName evidence="1">Maltose/maltodextrin transport system permease protein MalG</fullName>
    </recommendedName>
</protein>
<reference key="1">
    <citation type="journal article" date="2001" name="Nature">
        <title>Genome sequence of enterohaemorrhagic Escherichia coli O157:H7.</title>
        <authorList>
            <person name="Perna N.T."/>
            <person name="Plunkett G. III"/>
            <person name="Burland V."/>
            <person name="Mau B."/>
            <person name="Glasner J.D."/>
            <person name="Rose D.J."/>
            <person name="Mayhew G.F."/>
            <person name="Evans P.S."/>
            <person name="Gregor J."/>
            <person name="Kirkpatrick H.A."/>
            <person name="Posfai G."/>
            <person name="Hackett J."/>
            <person name="Klink S."/>
            <person name="Boutin A."/>
            <person name="Shao Y."/>
            <person name="Miller L."/>
            <person name="Grotbeck E.J."/>
            <person name="Davis N.W."/>
            <person name="Lim A."/>
            <person name="Dimalanta E.T."/>
            <person name="Potamousis K."/>
            <person name="Apodaca J."/>
            <person name="Anantharaman T.S."/>
            <person name="Lin J."/>
            <person name="Yen G."/>
            <person name="Schwartz D.C."/>
            <person name="Welch R.A."/>
            <person name="Blattner F.R."/>
        </authorList>
    </citation>
    <scope>NUCLEOTIDE SEQUENCE [LARGE SCALE GENOMIC DNA]</scope>
    <source>
        <strain>O157:H7 / EDL933 / ATCC 700927 / EHEC</strain>
    </source>
</reference>
<reference key="2">
    <citation type="journal article" date="2001" name="DNA Res.">
        <title>Complete genome sequence of enterohemorrhagic Escherichia coli O157:H7 and genomic comparison with a laboratory strain K-12.</title>
        <authorList>
            <person name="Hayashi T."/>
            <person name="Makino K."/>
            <person name="Ohnishi M."/>
            <person name="Kurokawa K."/>
            <person name="Ishii K."/>
            <person name="Yokoyama K."/>
            <person name="Han C.-G."/>
            <person name="Ohtsubo E."/>
            <person name="Nakayama K."/>
            <person name="Murata T."/>
            <person name="Tanaka M."/>
            <person name="Tobe T."/>
            <person name="Iida T."/>
            <person name="Takami H."/>
            <person name="Honda T."/>
            <person name="Sasakawa C."/>
            <person name="Ogasawara N."/>
            <person name="Yasunaga T."/>
            <person name="Kuhara S."/>
            <person name="Shiba T."/>
            <person name="Hattori M."/>
            <person name="Shinagawa H."/>
        </authorList>
    </citation>
    <scope>NUCLEOTIDE SEQUENCE [LARGE SCALE GENOMIC DNA]</scope>
    <source>
        <strain>O157:H7 / Sakai / RIMD 0509952 / EHEC</strain>
    </source>
</reference>
<evidence type="ECO:0000250" key="1">
    <source>
        <dbReference type="UniProtKB" id="P68183"/>
    </source>
</evidence>
<evidence type="ECO:0000255" key="2"/>
<evidence type="ECO:0000255" key="3">
    <source>
        <dbReference type="PROSITE-ProRule" id="PRU00441"/>
    </source>
</evidence>
<evidence type="ECO:0000305" key="4"/>
<name>MALG_ECO57</name>
<comment type="function">
    <text evidence="1">Part of the ABC transporter complex MalEFGK involved in maltose/maltodextrin import. Probably responsible for the translocation of the substrate across the membrane.</text>
</comment>
<comment type="subunit">
    <text evidence="1">The complex is composed of two ATP-binding proteins (MalK), two transmembrane proteins (MalG and MalF) and a solute-binding protein (MalE).</text>
</comment>
<comment type="subcellular location">
    <subcellularLocation>
        <location evidence="1">Cell inner membrane</location>
        <topology evidence="1">Multi-pass membrane protein</topology>
    </subcellularLocation>
</comment>
<comment type="similarity">
    <text evidence="4">Belongs to the binding-protein-dependent transport system permease family. MalFG subfamily.</text>
</comment>
<sequence length="296" mass="32225">MAMVQPKSQKARLFITHLLLLLFIAAIMFPLLMVVAISLRQGNFATGSLIPEQISWDHWKLALGFSVEQADGRITPPPFPVLLWLWNSVKVAGISAIGIVALSTTCAYAFARMRFPGKATLLKGMLIFQMFPAVLSLVALYALFDRLGEYIPFIGLNTHGGVIFAYLGGIALHVWTIKGYFETIDSSLEEAAALDGATPWQAFRLVLLPLSVPILAVVFILSFIAAITEVPVASLLLRDVNSYTLAVGMQQYLNPQNYLWGDFAAAAVMSALPITIVFLLAQRWLVNGLTAGGVKG</sequence>
<keyword id="KW-0997">Cell inner membrane</keyword>
<keyword id="KW-1003">Cell membrane</keyword>
<keyword id="KW-0472">Membrane</keyword>
<keyword id="KW-1185">Reference proteome</keyword>
<keyword id="KW-0762">Sugar transport</keyword>
<keyword id="KW-0812">Transmembrane</keyword>
<keyword id="KW-1133">Transmembrane helix</keyword>
<keyword id="KW-0813">Transport</keyword>
<gene>
    <name type="primary">malG</name>
    <name type="ordered locus">Z5630</name>
    <name type="ordered locus">ECs5015</name>
</gene>